<evidence type="ECO:0000255" key="1">
    <source>
        <dbReference type="HAMAP-Rule" id="MF_01306"/>
    </source>
</evidence>
<evidence type="ECO:0000305" key="2"/>
<protein>
    <recommendedName>
        <fullName evidence="1">Small ribosomal subunit protein uS4</fullName>
    </recommendedName>
    <alternativeName>
        <fullName evidence="2">30S ribosomal protein S4</fullName>
    </alternativeName>
</protein>
<comment type="function">
    <text evidence="1">One of the primary rRNA binding proteins, it binds directly to 16S rRNA where it nucleates assembly of the body of the 30S subunit.</text>
</comment>
<comment type="function">
    <text evidence="1">With S5 and S12 plays an important role in translational accuracy.</text>
</comment>
<comment type="subunit">
    <text evidence="1">Part of the 30S ribosomal subunit. Contacts protein S5. The interaction surface between S4 and S5 is involved in control of translational fidelity.</text>
</comment>
<comment type="similarity">
    <text evidence="1">Belongs to the universal ribosomal protein uS4 family.</text>
</comment>
<name>RS4_XANE5</name>
<feature type="chain" id="PRO_0000228940" description="Small ribosomal subunit protein uS4">
    <location>
        <begin position="1"/>
        <end position="208"/>
    </location>
</feature>
<feature type="domain" description="S4 RNA-binding" evidence="1">
    <location>
        <begin position="97"/>
        <end position="160"/>
    </location>
</feature>
<organism>
    <name type="scientific">Xanthomonas euvesicatoria pv. vesicatoria (strain 85-10)</name>
    <name type="common">Xanthomonas campestris pv. vesicatoria</name>
    <dbReference type="NCBI Taxonomy" id="316273"/>
    <lineage>
        <taxon>Bacteria</taxon>
        <taxon>Pseudomonadati</taxon>
        <taxon>Pseudomonadota</taxon>
        <taxon>Gammaproteobacteria</taxon>
        <taxon>Lysobacterales</taxon>
        <taxon>Lysobacteraceae</taxon>
        <taxon>Xanthomonas</taxon>
    </lineage>
</organism>
<proteinExistence type="inferred from homology"/>
<accession>Q3BWW0</accession>
<gene>
    <name evidence="1" type="primary">rpsD</name>
    <name type="ordered locus">XCV1022</name>
</gene>
<dbReference type="EMBL" id="AM039952">
    <property type="protein sequence ID" value="CAJ22653.1"/>
    <property type="molecule type" value="Genomic_DNA"/>
</dbReference>
<dbReference type="RefSeq" id="WP_002811641.1">
    <property type="nucleotide sequence ID" value="NZ_CP017190.1"/>
</dbReference>
<dbReference type="SMR" id="Q3BWW0"/>
<dbReference type="STRING" id="456327.BJD11_17625"/>
<dbReference type="GeneID" id="97509359"/>
<dbReference type="KEGG" id="xcv:XCV1022"/>
<dbReference type="eggNOG" id="COG0522">
    <property type="taxonomic scope" value="Bacteria"/>
</dbReference>
<dbReference type="HOGENOM" id="CLU_092403_0_2_6"/>
<dbReference type="Proteomes" id="UP000007069">
    <property type="component" value="Chromosome"/>
</dbReference>
<dbReference type="GO" id="GO:0015935">
    <property type="term" value="C:small ribosomal subunit"/>
    <property type="evidence" value="ECO:0007669"/>
    <property type="project" value="InterPro"/>
</dbReference>
<dbReference type="GO" id="GO:0019843">
    <property type="term" value="F:rRNA binding"/>
    <property type="evidence" value="ECO:0007669"/>
    <property type="project" value="UniProtKB-UniRule"/>
</dbReference>
<dbReference type="GO" id="GO:0003735">
    <property type="term" value="F:structural constituent of ribosome"/>
    <property type="evidence" value="ECO:0007669"/>
    <property type="project" value="InterPro"/>
</dbReference>
<dbReference type="GO" id="GO:0042274">
    <property type="term" value="P:ribosomal small subunit biogenesis"/>
    <property type="evidence" value="ECO:0007669"/>
    <property type="project" value="TreeGrafter"/>
</dbReference>
<dbReference type="GO" id="GO:0006412">
    <property type="term" value="P:translation"/>
    <property type="evidence" value="ECO:0007669"/>
    <property type="project" value="UniProtKB-UniRule"/>
</dbReference>
<dbReference type="CDD" id="cd00165">
    <property type="entry name" value="S4"/>
    <property type="match status" value="1"/>
</dbReference>
<dbReference type="FunFam" id="1.10.1050.10:FF:000001">
    <property type="entry name" value="30S ribosomal protein S4"/>
    <property type="match status" value="1"/>
</dbReference>
<dbReference type="FunFam" id="3.10.290.10:FF:000001">
    <property type="entry name" value="30S ribosomal protein S4"/>
    <property type="match status" value="1"/>
</dbReference>
<dbReference type="Gene3D" id="1.10.1050.10">
    <property type="entry name" value="Ribosomal Protein S4 Delta 41, Chain A, domain 1"/>
    <property type="match status" value="1"/>
</dbReference>
<dbReference type="Gene3D" id="3.10.290.10">
    <property type="entry name" value="RNA-binding S4 domain"/>
    <property type="match status" value="1"/>
</dbReference>
<dbReference type="HAMAP" id="MF_01306_B">
    <property type="entry name" value="Ribosomal_uS4_B"/>
    <property type="match status" value="1"/>
</dbReference>
<dbReference type="InterPro" id="IPR022801">
    <property type="entry name" value="Ribosomal_uS4"/>
</dbReference>
<dbReference type="InterPro" id="IPR005709">
    <property type="entry name" value="Ribosomal_uS4_bac-type"/>
</dbReference>
<dbReference type="InterPro" id="IPR018079">
    <property type="entry name" value="Ribosomal_uS4_CS"/>
</dbReference>
<dbReference type="InterPro" id="IPR001912">
    <property type="entry name" value="Ribosomal_uS4_N"/>
</dbReference>
<dbReference type="InterPro" id="IPR002942">
    <property type="entry name" value="S4_RNA-bd"/>
</dbReference>
<dbReference type="InterPro" id="IPR036986">
    <property type="entry name" value="S4_RNA-bd_sf"/>
</dbReference>
<dbReference type="NCBIfam" id="NF003717">
    <property type="entry name" value="PRK05327.1"/>
    <property type="match status" value="1"/>
</dbReference>
<dbReference type="NCBIfam" id="TIGR01017">
    <property type="entry name" value="rpsD_bact"/>
    <property type="match status" value="1"/>
</dbReference>
<dbReference type="PANTHER" id="PTHR11831">
    <property type="entry name" value="30S 40S RIBOSOMAL PROTEIN"/>
    <property type="match status" value="1"/>
</dbReference>
<dbReference type="PANTHER" id="PTHR11831:SF4">
    <property type="entry name" value="SMALL RIBOSOMAL SUBUNIT PROTEIN US4M"/>
    <property type="match status" value="1"/>
</dbReference>
<dbReference type="Pfam" id="PF00163">
    <property type="entry name" value="Ribosomal_S4"/>
    <property type="match status" value="1"/>
</dbReference>
<dbReference type="Pfam" id="PF01479">
    <property type="entry name" value="S4"/>
    <property type="match status" value="1"/>
</dbReference>
<dbReference type="SMART" id="SM01390">
    <property type="entry name" value="Ribosomal_S4"/>
    <property type="match status" value="1"/>
</dbReference>
<dbReference type="SMART" id="SM00363">
    <property type="entry name" value="S4"/>
    <property type="match status" value="1"/>
</dbReference>
<dbReference type="SUPFAM" id="SSF55174">
    <property type="entry name" value="Alpha-L RNA-binding motif"/>
    <property type="match status" value="1"/>
</dbReference>
<dbReference type="PROSITE" id="PS00632">
    <property type="entry name" value="RIBOSOMAL_S4"/>
    <property type="match status" value="1"/>
</dbReference>
<dbReference type="PROSITE" id="PS50889">
    <property type="entry name" value="S4"/>
    <property type="match status" value="1"/>
</dbReference>
<sequence length="208" mass="23281">MARYIGPTCKLARREGADLSLKSPARALDSKCKLEQKPGQHGAARKGKLSDYATQLREKQKVKRIYGLLERQFRNYYKKASTKKGNTGENLLQLLETRLDNVCYRMGFAVTRPAARQLVSHRGVLVNGKSVNLASYQIKAGDAITLSEKAQKQLRVQEALTVAEQHDMTPSWVEVDSKKFSGVFKAVPDRADLPSDINEALIVELYSK</sequence>
<reference key="1">
    <citation type="journal article" date="2005" name="J. Bacteriol.">
        <title>Insights into genome plasticity and pathogenicity of the plant pathogenic Bacterium Xanthomonas campestris pv. vesicatoria revealed by the complete genome sequence.</title>
        <authorList>
            <person name="Thieme F."/>
            <person name="Koebnik R."/>
            <person name="Bekel T."/>
            <person name="Berger C."/>
            <person name="Boch J."/>
            <person name="Buettner D."/>
            <person name="Caldana C."/>
            <person name="Gaigalat L."/>
            <person name="Goesmann A."/>
            <person name="Kay S."/>
            <person name="Kirchner O."/>
            <person name="Lanz C."/>
            <person name="Linke B."/>
            <person name="McHardy A.C."/>
            <person name="Meyer F."/>
            <person name="Mittenhuber G."/>
            <person name="Nies D.H."/>
            <person name="Niesbach-Kloesgen U."/>
            <person name="Patschkowski T."/>
            <person name="Rueckert C."/>
            <person name="Rupp O."/>
            <person name="Schneiker S."/>
            <person name="Schuster S.C."/>
            <person name="Vorhoelter F.J."/>
            <person name="Weber E."/>
            <person name="Puehler A."/>
            <person name="Bonas U."/>
            <person name="Bartels D."/>
            <person name="Kaiser O."/>
        </authorList>
    </citation>
    <scope>NUCLEOTIDE SEQUENCE [LARGE SCALE GENOMIC DNA]</scope>
    <source>
        <strain>85-10</strain>
    </source>
</reference>
<keyword id="KW-0687">Ribonucleoprotein</keyword>
<keyword id="KW-0689">Ribosomal protein</keyword>
<keyword id="KW-0694">RNA-binding</keyword>
<keyword id="KW-0699">rRNA-binding</keyword>